<gene>
    <name evidence="3" type="primary">xsc</name>
    <name evidence="5" type="ORF">ISM_10690</name>
</gene>
<feature type="chain" id="PRO_0000445999" description="Sulfoacetaldehyde acetyltransferase">
    <location>
        <begin position="1"/>
        <end position="603"/>
    </location>
</feature>
<organism>
    <name type="scientific">Roseovarius nubinhibens (strain ATCC BAA-591 / DSM 15170 / ISM)</name>
    <dbReference type="NCBI Taxonomy" id="89187"/>
    <lineage>
        <taxon>Bacteria</taxon>
        <taxon>Pseudomonadati</taxon>
        <taxon>Pseudomonadota</taxon>
        <taxon>Alphaproteobacteria</taxon>
        <taxon>Rhodobacterales</taxon>
        <taxon>Roseobacteraceae</taxon>
        <taxon>Roseovarius</taxon>
    </lineage>
</organism>
<proteinExistence type="evidence at protein level"/>
<accession>A3SR25</accession>
<evidence type="ECO:0000250" key="1">
    <source>
        <dbReference type="UniProtKB" id="Q84H44"/>
    </source>
</evidence>
<evidence type="ECO:0000269" key="2">
    <source>
    </source>
</evidence>
<evidence type="ECO:0000303" key="3">
    <source>
    </source>
</evidence>
<evidence type="ECO:0000305" key="4"/>
<evidence type="ECO:0000312" key="5">
    <source>
        <dbReference type="EMBL" id="EAP75048.1"/>
    </source>
</evidence>
<protein>
    <recommendedName>
        <fullName evidence="3">Sulfoacetaldehyde acetyltransferase</fullName>
        <ecNumber evidence="2">2.3.3.15</ecNumber>
    </recommendedName>
</protein>
<name>XSC_ROSNI</name>
<reference key="1">
    <citation type="submission" date="2005-12" db="EMBL/GenBank/DDBJ databases">
        <authorList>
            <person name="Moran M.A."/>
            <person name="Ferriera S."/>
            <person name="Johnson J."/>
            <person name="Kravitz S."/>
            <person name="Halpern A."/>
            <person name="Remington K."/>
            <person name="Beeson K."/>
            <person name="Tran B."/>
            <person name="Rogers Y.-H."/>
            <person name="Friedman R."/>
            <person name="Venter J.C."/>
        </authorList>
    </citation>
    <scope>NUCLEOTIDE SEQUENCE [LARGE SCALE GENOMIC DNA]</scope>
    <source>
        <strain>ATCC BAA-591 / DSM 15170 / ISM</strain>
    </source>
</reference>
<reference key="2">
    <citation type="journal article" date="2009" name="J. Bacteriol.">
        <title>Bifurcated degradative pathway of 3-sulfolactate in Roseovarius nubinhibens ISM via sulfoacetaldehyde acetyltransferase and (S)-cysteate sulfolyase.</title>
        <authorList>
            <person name="Denger K."/>
            <person name="Mayer J."/>
            <person name="Buhmann M."/>
            <person name="Weinitschke S."/>
            <person name="Smits T.H."/>
            <person name="Cook A.M."/>
        </authorList>
    </citation>
    <scope>FUNCTION</scope>
    <scope>CATALYTIC ACTIVITY</scope>
    <scope>INDUCTION</scope>
    <source>
        <strain>ATCC BAA-591 / DSM 15170 / ISM</strain>
    </source>
</reference>
<keyword id="KW-0012">Acyltransferase</keyword>
<keyword id="KW-0460">Magnesium</keyword>
<keyword id="KW-0479">Metal-binding</keyword>
<keyword id="KW-1185">Reference proteome</keyword>
<keyword id="KW-0786">Thiamine pyrophosphate</keyword>
<keyword id="KW-0808">Transferase</keyword>
<dbReference type="EC" id="2.3.3.15" evidence="2"/>
<dbReference type="EMBL" id="AALY01000004">
    <property type="protein sequence ID" value="EAP75048.1"/>
    <property type="molecule type" value="Genomic_DNA"/>
</dbReference>
<dbReference type="SMR" id="A3SR25"/>
<dbReference type="STRING" id="89187.ISM_10690"/>
<dbReference type="eggNOG" id="COG0028">
    <property type="taxonomic scope" value="Bacteria"/>
</dbReference>
<dbReference type="HOGENOM" id="CLU_013748_3_1_5"/>
<dbReference type="BioCyc" id="MetaCyc:MONOMER-15909"/>
<dbReference type="BRENDA" id="2.3.3.15">
    <property type="organism ID" value="10365"/>
</dbReference>
<dbReference type="Proteomes" id="UP000005954">
    <property type="component" value="Unassembled WGS sequence"/>
</dbReference>
<dbReference type="GO" id="GO:0005948">
    <property type="term" value="C:acetolactate synthase complex"/>
    <property type="evidence" value="ECO:0007669"/>
    <property type="project" value="TreeGrafter"/>
</dbReference>
<dbReference type="GO" id="GO:0003984">
    <property type="term" value="F:acetolactate synthase activity"/>
    <property type="evidence" value="ECO:0007669"/>
    <property type="project" value="TreeGrafter"/>
</dbReference>
<dbReference type="GO" id="GO:0050660">
    <property type="term" value="F:flavin adenine dinucleotide binding"/>
    <property type="evidence" value="ECO:0007669"/>
    <property type="project" value="TreeGrafter"/>
</dbReference>
<dbReference type="GO" id="GO:0000287">
    <property type="term" value="F:magnesium ion binding"/>
    <property type="evidence" value="ECO:0007669"/>
    <property type="project" value="InterPro"/>
</dbReference>
<dbReference type="GO" id="GO:0050487">
    <property type="term" value="F:sulfoacetaldehyde acetyltransferase activity"/>
    <property type="evidence" value="ECO:0007669"/>
    <property type="project" value="UniProtKB-EC"/>
</dbReference>
<dbReference type="GO" id="GO:0030976">
    <property type="term" value="F:thiamine pyrophosphate binding"/>
    <property type="evidence" value="ECO:0007669"/>
    <property type="project" value="InterPro"/>
</dbReference>
<dbReference type="GO" id="GO:0009097">
    <property type="term" value="P:isoleucine biosynthetic process"/>
    <property type="evidence" value="ECO:0007669"/>
    <property type="project" value="TreeGrafter"/>
</dbReference>
<dbReference type="GO" id="GO:0009099">
    <property type="term" value="P:L-valine biosynthetic process"/>
    <property type="evidence" value="ECO:0007669"/>
    <property type="project" value="TreeGrafter"/>
</dbReference>
<dbReference type="GO" id="GO:0019529">
    <property type="term" value="P:taurine catabolic process"/>
    <property type="evidence" value="ECO:0007669"/>
    <property type="project" value="InterPro"/>
</dbReference>
<dbReference type="CDD" id="cd07035">
    <property type="entry name" value="TPP_PYR_POX_like"/>
    <property type="match status" value="1"/>
</dbReference>
<dbReference type="FunFam" id="3.40.50.970:FF:000107">
    <property type="entry name" value="Sulfoacetaldehyde acetyltransferase Xsc"/>
    <property type="match status" value="1"/>
</dbReference>
<dbReference type="Gene3D" id="3.40.50.970">
    <property type="match status" value="2"/>
</dbReference>
<dbReference type="Gene3D" id="3.40.50.1220">
    <property type="entry name" value="TPP-binding domain"/>
    <property type="match status" value="1"/>
</dbReference>
<dbReference type="InterPro" id="IPR029035">
    <property type="entry name" value="DHS-like_NAD/FAD-binding_dom"/>
</dbReference>
<dbReference type="InterPro" id="IPR017820">
    <property type="entry name" value="Sulphoacetald_Actrfrase"/>
</dbReference>
<dbReference type="InterPro" id="IPR029061">
    <property type="entry name" value="THDP-binding"/>
</dbReference>
<dbReference type="InterPro" id="IPR012000">
    <property type="entry name" value="Thiamin_PyroP_enz_cen_dom"/>
</dbReference>
<dbReference type="InterPro" id="IPR012001">
    <property type="entry name" value="Thiamin_PyroP_enz_TPP-bd_dom"/>
</dbReference>
<dbReference type="InterPro" id="IPR000399">
    <property type="entry name" value="TPP-bd_CS"/>
</dbReference>
<dbReference type="InterPro" id="IPR045229">
    <property type="entry name" value="TPP_enz"/>
</dbReference>
<dbReference type="InterPro" id="IPR011766">
    <property type="entry name" value="TPP_enzyme_TPP-bd"/>
</dbReference>
<dbReference type="NCBIfam" id="NF005713">
    <property type="entry name" value="PRK07525.1"/>
    <property type="match status" value="1"/>
</dbReference>
<dbReference type="NCBIfam" id="TIGR03457">
    <property type="entry name" value="sulphoacet_xsc"/>
    <property type="match status" value="1"/>
</dbReference>
<dbReference type="PANTHER" id="PTHR18968:SF13">
    <property type="entry name" value="ACETOLACTATE SYNTHASE CATALYTIC SUBUNIT, MITOCHONDRIAL"/>
    <property type="match status" value="1"/>
</dbReference>
<dbReference type="PANTHER" id="PTHR18968">
    <property type="entry name" value="THIAMINE PYROPHOSPHATE ENZYMES"/>
    <property type="match status" value="1"/>
</dbReference>
<dbReference type="Pfam" id="PF02775">
    <property type="entry name" value="TPP_enzyme_C"/>
    <property type="match status" value="1"/>
</dbReference>
<dbReference type="Pfam" id="PF00205">
    <property type="entry name" value="TPP_enzyme_M"/>
    <property type="match status" value="1"/>
</dbReference>
<dbReference type="Pfam" id="PF02776">
    <property type="entry name" value="TPP_enzyme_N"/>
    <property type="match status" value="1"/>
</dbReference>
<dbReference type="SUPFAM" id="SSF52467">
    <property type="entry name" value="DHS-like NAD/FAD-binding domain"/>
    <property type="match status" value="1"/>
</dbReference>
<dbReference type="SUPFAM" id="SSF52518">
    <property type="entry name" value="Thiamin diphosphate-binding fold (THDP-binding)"/>
    <property type="match status" value="2"/>
</dbReference>
<dbReference type="PROSITE" id="PS00187">
    <property type="entry name" value="TPP_ENZYMES"/>
    <property type="match status" value="1"/>
</dbReference>
<sequence>MLFRASQPEDKPMKMTTEEAFVKTLQMHGIQHAFGIIGSAMMPISDIFGKAGITFWDCAHEGSGGMMADGYTRATGKMSMMIAQNGPGITNFVTAVKTAYWNHTPLLLVTPQAANKTMGQGGFQEVEQMAAFKDMVCYQEEVRDPTRMAEVLNRVILNAKRYSAPAQINVPRDYFTQVIDIELPKIVDFERPSGGEEALDEAAKLLSEAKFPVILNGAGVILAGAIPATAELAERLDAPVCCGYQHNDAFPGSHPLHAGPLGYNGSKAGMELISKADVVLALGTRLNPFSTLPGYGIDYWPKDAKIIQVDVKPERIGLTKPVAVGIVGDAKKVAKTILAKLSDTAGDADREERKATIAKTKSAWAQELSSMDHEQDDPGTTWNERARGAKPDWMSPRMAWRAIQAALPKEAIISSDIGNNCAIGNAYPSFEEGRKYLAPGLFGPCGYGLPAVVGAKIGCPDTPVVGFSGDGAFGIAVNELTAIGRGEWPAVTHVVFRNYQWGAEKRNSTLWFDDNFVGTELDEQVSYAGIAKACGLKGVVARTMDELTDALDQAIKDQKAGTTTLIEAMINQELGEPFRRDAMKKPVAVAGIDPADMREQQVD</sequence>
<comment type="function">
    <text evidence="2">Catalyzes the degradation of sulfoacetaldehyde into sulfite and acetyl phosphate. Involved in sulfolactate degradation.</text>
</comment>
<comment type="catalytic activity">
    <reaction evidence="2">
        <text>acetyl phosphate + sulfite + H(+) = sulfoacetaldehyde + phosphate</text>
        <dbReference type="Rhea" id="RHEA:24204"/>
        <dbReference type="ChEBI" id="CHEBI:15378"/>
        <dbReference type="ChEBI" id="CHEBI:17359"/>
        <dbReference type="ChEBI" id="CHEBI:22191"/>
        <dbReference type="ChEBI" id="CHEBI:43474"/>
        <dbReference type="ChEBI" id="CHEBI:58246"/>
        <dbReference type="EC" id="2.3.3.15"/>
    </reaction>
    <physiologicalReaction direction="right-to-left" evidence="2">
        <dbReference type="Rhea" id="RHEA:24206"/>
    </physiologicalReaction>
</comment>
<comment type="cofactor">
    <cofactor evidence="1">
        <name>Mg(2+)</name>
        <dbReference type="ChEBI" id="CHEBI:18420"/>
    </cofactor>
</comment>
<comment type="cofactor">
    <cofactor evidence="1">
        <name>thiamine diphosphate</name>
        <dbReference type="ChEBI" id="CHEBI:58937"/>
    </cofactor>
</comment>
<comment type="induction">
    <text evidence="2">Induced during growth on sulfolactate or taurine.</text>
</comment>
<comment type="similarity">
    <text evidence="4">Belongs to the TPP enzyme family.</text>
</comment>